<proteinExistence type="inferred from homology"/>
<gene>
    <name type="ordered locus">CT_691</name>
</gene>
<comment type="similarity">
    <text evidence="1">Belongs to the UPF0111 family.</text>
</comment>
<name>Y691_CHLTR</name>
<feature type="chain" id="PRO_0000154908" description="UPF0111 protein CT_691">
    <location>
        <begin position="1"/>
        <end position="224"/>
    </location>
</feature>
<protein>
    <recommendedName>
        <fullName>UPF0111 protein CT_691</fullName>
    </recommendedName>
</protein>
<sequence length="224" mass="25176">MQVLASLFGQSPFAPLQAHLELVSSTINVLFPLFSALKEGDYERVGVLAQLVSSKERQADGMKNDVRRHLASGVFLPVSRAALLEIISIQDSLADCAEDIAILLTVKELQFYPEFEELFFEFLQKTVQSFEAVAKTIREMDRLLESSFGGNRADKTRVLVSEVSNLEHECDLLQRELMKVFFSDDFAIGTKGFVLWMQIIKGISGISNNSEKLAYRVSMTLEEK</sequence>
<keyword id="KW-1185">Reference proteome</keyword>
<reference key="1">
    <citation type="journal article" date="1998" name="Science">
        <title>Genome sequence of an obligate intracellular pathogen of humans: Chlamydia trachomatis.</title>
        <authorList>
            <person name="Stephens R.S."/>
            <person name="Kalman S."/>
            <person name="Lammel C.J."/>
            <person name="Fan J."/>
            <person name="Marathe R."/>
            <person name="Aravind L."/>
            <person name="Mitchell W.P."/>
            <person name="Olinger L."/>
            <person name="Tatusov R.L."/>
            <person name="Zhao Q."/>
            <person name="Koonin E.V."/>
            <person name="Davis R.W."/>
        </authorList>
    </citation>
    <scope>NUCLEOTIDE SEQUENCE [LARGE SCALE GENOMIC DNA]</scope>
    <source>
        <strain>ATCC VR-885 / DSM 19411 / UW-3/Cx</strain>
    </source>
</reference>
<organism>
    <name type="scientific">Chlamydia trachomatis serovar D (strain ATCC VR-885 / DSM 19411 / UW-3/Cx)</name>
    <dbReference type="NCBI Taxonomy" id="272561"/>
    <lineage>
        <taxon>Bacteria</taxon>
        <taxon>Pseudomonadati</taxon>
        <taxon>Chlamydiota</taxon>
        <taxon>Chlamydiia</taxon>
        <taxon>Chlamydiales</taxon>
        <taxon>Chlamydiaceae</taxon>
        <taxon>Chlamydia/Chlamydophila group</taxon>
        <taxon>Chlamydia</taxon>
    </lineage>
</organism>
<evidence type="ECO:0000305" key="1"/>
<accession>O84697</accession>
<dbReference type="EMBL" id="AE001273">
    <property type="protein sequence ID" value="AAC68286.1"/>
    <property type="molecule type" value="Genomic_DNA"/>
</dbReference>
<dbReference type="PIR" id="G71483">
    <property type="entry name" value="G71483"/>
</dbReference>
<dbReference type="RefSeq" id="NP_220210.1">
    <property type="nucleotide sequence ID" value="NC_000117.1"/>
</dbReference>
<dbReference type="RefSeq" id="WP_009872066.1">
    <property type="nucleotide sequence ID" value="NC_000117.1"/>
</dbReference>
<dbReference type="SMR" id="O84697"/>
<dbReference type="STRING" id="272561.CT_691"/>
<dbReference type="EnsemblBacteria" id="AAC68286">
    <property type="protein sequence ID" value="AAC68286"/>
    <property type="gene ID" value="CT_691"/>
</dbReference>
<dbReference type="GeneID" id="884480"/>
<dbReference type="KEGG" id="ctr:CT_691"/>
<dbReference type="PATRIC" id="fig|272561.5.peg.760"/>
<dbReference type="HOGENOM" id="CLU_104916_0_1_0"/>
<dbReference type="InParanoid" id="O84697"/>
<dbReference type="OrthoDB" id="9780540at2"/>
<dbReference type="Proteomes" id="UP000000431">
    <property type="component" value="Chromosome"/>
</dbReference>
<dbReference type="Gene3D" id="1.20.58.220">
    <property type="entry name" value="Phosphate transport system protein phou homolog 2, domain 2"/>
    <property type="match status" value="1"/>
</dbReference>
<dbReference type="InterPro" id="IPR002727">
    <property type="entry name" value="DUF47"/>
</dbReference>
<dbReference type="InterPro" id="IPR038078">
    <property type="entry name" value="PhoU-like_sf"/>
</dbReference>
<dbReference type="InterPro" id="IPR018445">
    <property type="entry name" value="Put_Phosphate_transp_reg"/>
</dbReference>
<dbReference type="NCBIfam" id="TIGR00153">
    <property type="entry name" value="TIGR00153 family protein"/>
    <property type="match status" value="1"/>
</dbReference>
<dbReference type="PANTHER" id="PTHR36536">
    <property type="entry name" value="UPF0111 PROTEIN HI_1603"/>
    <property type="match status" value="1"/>
</dbReference>
<dbReference type="PANTHER" id="PTHR36536:SF3">
    <property type="entry name" value="UPF0111 PROTEIN HI_1603"/>
    <property type="match status" value="1"/>
</dbReference>
<dbReference type="Pfam" id="PF01865">
    <property type="entry name" value="PhoU_div"/>
    <property type="match status" value="1"/>
</dbReference>
<dbReference type="SUPFAM" id="SSF109755">
    <property type="entry name" value="PhoU-like"/>
    <property type="match status" value="1"/>
</dbReference>